<protein>
    <recommendedName>
        <fullName evidence="1">Chaperonin GroEL</fullName>
        <ecNumber evidence="1">5.6.1.7</ecNumber>
    </recommendedName>
    <alternativeName>
        <fullName evidence="1">60 kDa chaperonin</fullName>
    </alternativeName>
    <alternativeName>
        <fullName evidence="1">Chaperonin-60</fullName>
        <shortName evidence="1">Cpn60</shortName>
    </alternativeName>
</protein>
<reference key="1">
    <citation type="journal article" date="2011" name="Proc. Natl. Acad. Sci. U.S.A.">
        <title>Genomic anatomy of Escherichia coli O157:H7 outbreaks.</title>
        <authorList>
            <person name="Eppinger M."/>
            <person name="Mammel M.K."/>
            <person name="Leclerc J.E."/>
            <person name="Ravel J."/>
            <person name="Cebula T.A."/>
        </authorList>
    </citation>
    <scope>NUCLEOTIDE SEQUENCE [LARGE SCALE GENOMIC DNA]</scope>
    <source>
        <strain>EC4115 / EHEC</strain>
    </source>
</reference>
<sequence>MAAKDVKFGNDARVKMLRGVNVLADAVKVTLGPKGRNVVLDKSFGAPTITKDGVSVAREIELEDKFENMGAQMVKEVASKANDAAGDGTTTATVLAQAIITEGLKAVAAGMNPMDLKRGIDKAVTAAVEELKALSVPCSDSKAIAQVGTISANSDETVGKLIAEAMDKVGKEGVITVEDGTGLQDELDVVEGMQFDRGYLSPYFINKPETGAVELESPFILLADKKISNIREMLPVLEAVAKAGKPLLIIAEDVEGEALATLVVNTMRGIVKVAAVKAPGFGDRRKAMLQDIATLTGGTVISEEIGMELEKATLEDLGQAKRVVINKDTTTIIDGVGEEAAIQGRVAQIRQQIEEATSDYDREKLQERVAKLAGGVAVIKVGAATEVEMKEKKARVEDALHATRAAVEEGVVAGGGVALIRVASKLADLRGQNEDQNVGIKVALRAMEAPLRQIVLNCGEEPSVVANTVKGGDGNYGYNAATEEYGNMIDMGILDPTKVTRSALQYAASVAGLMITTECMVTDLPKNDAADLGAAGGMGGMGGMGGMM</sequence>
<comment type="function">
    <text evidence="1">Together with its co-chaperonin GroES, plays an essential role in assisting protein folding. The GroEL-GroES system forms a nano-cage that allows encapsulation of the non-native substrate proteins and provides a physical environment optimized to promote and accelerate protein folding.</text>
</comment>
<comment type="catalytic activity">
    <reaction evidence="1">
        <text>ATP + H2O + a folded polypeptide = ADP + phosphate + an unfolded polypeptide.</text>
        <dbReference type="EC" id="5.6.1.7"/>
    </reaction>
</comment>
<comment type="subunit">
    <text evidence="1">Forms a cylinder of 14 subunits composed of two heptameric rings stacked back-to-back. Interacts with the co-chaperonin GroES.</text>
</comment>
<comment type="subcellular location">
    <subcellularLocation>
        <location evidence="1">Cytoplasm</location>
    </subcellularLocation>
</comment>
<comment type="similarity">
    <text evidence="1">Belongs to the chaperonin (HSP60) family.</text>
</comment>
<organism>
    <name type="scientific">Escherichia coli O157:H7 (strain EC4115 / EHEC)</name>
    <dbReference type="NCBI Taxonomy" id="444450"/>
    <lineage>
        <taxon>Bacteria</taxon>
        <taxon>Pseudomonadati</taxon>
        <taxon>Pseudomonadota</taxon>
        <taxon>Gammaproteobacteria</taxon>
        <taxon>Enterobacterales</taxon>
        <taxon>Enterobacteriaceae</taxon>
        <taxon>Escherichia</taxon>
    </lineage>
</organism>
<gene>
    <name evidence="1" type="primary">groEL</name>
    <name evidence="1" type="synonym">groL</name>
    <name type="ordered locus">ECH74115_5659</name>
</gene>
<accession>B5Z2F2</accession>
<keyword id="KW-0067">ATP-binding</keyword>
<keyword id="KW-0143">Chaperone</keyword>
<keyword id="KW-0963">Cytoplasm</keyword>
<keyword id="KW-0413">Isomerase</keyword>
<keyword id="KW-0547">Nucleotide-binding</keyword>
<proteinExistence type="inferred from homology"/>
<feature type="chain" id="PRO_1000130007" description="Chaperonin GroEL">
    <location>
        <begin position="1"/>
        <end position="548"/>
    </location>
</feature>
<feature type="binding site" evidence="1">
    <location>
        <begin position="30"/>
        <end position="33"/>
    </location>
    <ligand>
        <name>ATP</name>
        <dbReference type="ChEBI" id="CHEBI:30616"/>
    </ligand>
</feature>
<feature type="binding site" evidence="1">
    <location>
        <position position="51"/>
    </location>
    <ligand>
        <name>ATP</name>
        <dbReference type="ChEBI" id="CHEBI:30616"/>
    </ligand>
</feature>
<feature type="binding site" evidence="1">
    <location>
        <begin position="87"/>
        <end position="91"/>
    </location>
    <ligand>
        <name>ATP</name>
        <dbReference type="ChEBI" id="CHEBI:30616"/>
    </ligand>
</feature>
<feature type="binding site" evidence="1">
    <location>
        <position position="415"/>
    </location>
    <ligand>
        <name>ATP</name>
        <dbReference type="ChEBI" id="CHEBI:30616"/>
    </ligand>
</feature>
<feature type="binding site" evidence="1">
    <location>
        <begin position="479"/>
        <end position="481"/>
    </location>
    <ligand>
        <name>ATP</name>
        <dbReference type="ChEBI" id="CHEBI:30616"/>
    </ligand>
</feature>
<feature type="binding site" evidence="1">
    <location>
        <position position="495"/>
    </location>
    <ligand>
        <name>ATP</name>
        <dbReference type="ChEBI" id="CHEBI:30616"/>
    </ligand>
</feature>
<dbReference type="EC" id="5.6.1.7" evidence="1"/>
<dbReference type="EMBL" id="CP001164">
    <property type="protein sequence ID" value="ACI37048.1"/>
    <property type="molecule type" value="Genomic_DNA"/>
</dbReference>
<dbReference type="RefSeq" id="WP_000729117.1">
    <property type="nucleotide sequence ID" value="NC_011353.1"/>
</dbReference>
<dbReference type="SMR" id="B5Z2F2"/>
<dbReference type="GeneID" id="93777681"/>
<dbReference type="KEGG" id="ecf:ECH74115_5659"/>
<dbReference type="HOGENOM" id="CLU_016503_3_0_6"/>
<dbReference type="GO" id="GO:0005737">
    <property type="term" value="C:cytoplasm"/>
    <property type="evidence" value="ECO:0007669"/>
    <property type="project" value="UniProtKB-SubCell"/>
</dbReference>
<dbReference type="GO" id="GO:0005524">
    <property type="term" value="F:ATP binding"/>
    <property type="evidence" value="ECO:0007669"/>
    <property type="project" value="UniProtKB-UniRule"/>
</dbReference>
<dbReference type="GO" id="GO:0140662">
    <property type="term" value="F:ATP-dependent protein folding chaperone"/>
    <property type="evidence" value="ECO:0007669"/>
    <property type="project" value="InterPro"/>
</dbReference>
<dbReference type="GO" id="GO:0016853">
    <property type="term" value="F:isomerase activity"/>
    <property type="evidence" value="ECO:0007669"/>
    <property type="project" value="UniProtKB-KW"/>
</dbReference>
<dbReference type="GO" id="GO:0051082">
    <property type="term" value="F:unfolded protein binding"/>
    <property type="evidence" value="ECO:0007669"/>
    <property type="project" value="UniProtKB-UniRule"/>
</dbReference>
<dbReference type="GO" id="GO:0042026">
    <property type="term" value="P:protein refolding"/>
    <property type="evidence" value="ECO:0007669"/>
    <property type="project" value="UniProtKB-UniRule"/>
</dbReference>
<dbReference type="CDD" id="cd03344">
    <property type="entry name" value="GroEL"/>
    <property type="match status" value="1"/>
</dbReference>
<dbReference type="FunFam" id="1.10.560.10:FF:000001">
    <property type="entry name" value="60 kDa chaperonin"/>
    <property type="match status" value="1"/>
</dbReference>
<dbReference type="FunFam" id="3.50.7.10:FF:000001">
    <property type="entry name" value="60 kDa chaperonin"/>
    <property type="match status" value="1"/>
</dbReference>
<dbReference type="Gene3D" id="3.50.7.10">
    <property type="entry name" value="GroEL"/>
    <property type="match status" value="1"/>
</dbReference>
<dbReference type="Gene3D" id="1.10.560.10">
    <property type="entry name" value="GroEL-like equatorial domain"/>
    <property type="match status" value="1"/>
</dbReference>
<dbReference type="Gene3D" id="3.30.260.10">
    <property type="entry name" value="TCP-1-like chaperonin intermediate domain"/>
    <property type="match status" value="1"/>
</dbReference>
<dbReference type="HAMAP" id="MF_00600">
    <property type="entry name" value="CH60"/>
    <property type="match status" value="1"/>
</dbReference>
<dbReference type="InterPro" id="IPR018370">
    <property type="entry name" value="Chaperonin_Cpn60_CS"/>
</dbReference>
<dbReference type="InterPro" id="IPR001844">
    <property type="entry name" value="Cpn60/GroEL"/>
</dbReference>
<dbReference type="InterPro" id="IPR002423">
    <property type="entry name" value="Cpn60/GroEL/TCP-1"/>
</dbReference>
<dbReference type="InterPro" id="IPR027409">
    <property type="entry name" value="GroEL-like_apical_dom_sf"/>
</dbReference>
<dbReference type="InterPro" id="IPR027413">
    <property type="entry name" value="GROEL-like_equatorial_sf"/>
</dbReference>
<dbReference type="InterPro" id="IPR027410">
    <property type="entry name" value="TCP-1-like_intermed_sf"/>
</dbReference>
<dbReference type="NCBIfam" id="TIGR02348">
    <property type="entry name" value="GroEL"/>
    <property type="match status" value="1"/>
</dbReference>
<dbReference type="NCBIfam" id="NF000592">
    <property type="entry name" value="PRK00013.1"/>
    <property type="match status" value="1"/>
</dbReference>
<dbReference type="NCBIfam" id="NF009487">
    <property type="entry name" value="PRK12849.1"/>
    <property type="match status" value="1"/>
</dbReference>
<dbReference type="NCBIfam" id="NF009488">
    <property type="entry name" value="PRK12850.1"/>
    <property type="match status" value="1"/>
</dbReference>
<dbReference type="NCBIfam" id="NF009489">
    <property type="entry name" value="PRK12851.1"/>
    <property type="match status" value="1"/>
</dbReference>
<dbReference type="PANTHER" id="PTHR45633">
    <property type="entry name" value="60 KDA HEAT SHOCK PROTEIN, MITOCHONDRIAL"/>
    <property type="match status" value="1"/>
</dbReference>
<dbReference type="Pfam" id="PF00118">
    <property type="entry name" value="Cpn60_TCP1"/>
    <property type="match status" value="1"/>
</dbReference>
<dbReference type="PRINTS" id="PR00298">
    <property type="entry name" value="CHAPERONIN60"/>
</dbReference>
<dbReference type="SUPFAM" id="SSF52029">
    <property type="entry name" value="GroEL apical domain-like"/>
    <property type="match status" value="1"/>
</dbReference>
<dbReference type="SUPFAM" id="SSF48592">
    <property type="entry name" value="GroEL equatorial domain-like"/>
    <property type="match status" value="1"/>
</dbReference>
<dbReference type="SUPFAM" id="SSF54849">
    <property type="entry name" value="GroEL-intermediate domain like"/>
    <property type="match status" value="1"/>
</dbReference>
<dbReference type="PROSITE" id="PS00296">
    <property type="entry name" value="CHAPERONINS_CPN60"/>
    <property type="match status" value="1"/>
</dbReference>
<evidence type="ECO:0000255" key="1">
    <source>
        <dbReference type="HAMAP-Rule" id="MF_00600"/>
    </source>
</evidence>
<name>CH60_ECO5E</name>